<feature type="chain" id="PRO_0000208874" description="Lysozyme C">
    <location>
        <begin position="1"/>
        <end position="129"/>
    </location>
</feature>
<feature type="domain" description="C-type lysozyme" evidence="2">
    <location>
        <begin position="1"/>
        <end position="129"/>
    </location>
</feature>
<feature type="active site" evidence="2">
    <location>
        <position position="35"/>
    </location>
</feature>
<feature type="active site" evidence="2">
    <location>
        <position position="52"/>
    </location>
</feature>
<feature type="disulfide bond" evidence="2">
    <location>
        <begin position="6"/>
        <end position="127"/>
    </location>
</feature>
<feature type="disulfide bond" evidence="2">
    <location>
        <begin position="30"/>
        <end position="115"/>
    </location>
</feature>
<feature type="disulfide bond" evidence="2">
    <location>
        <begin position="64"/>
        <end position="80"/>
    </location>
</feature>
<feature type="disulfide bond" evidence="2">
    <location>
        <begin position="76"/>
        <end position="94"/>
    </location>
</feature>
<dbReference type="EC" id="3.2.1.17"/>
<dbReference type="PIR" id="JC7908">
    <property type="entry name" value="JC7908"/>
</dbReference>
<dbReference type="SMR" id="Q7LZI3"/>
<dbReference type="GO" id="GO:0005576">
    <property type="term" value="C:extracellular region"/>
    <property type="evidence" value="ECO:0007669"/>
    <property type="project" value="UniProtKB-SubCell"/>
</dbReference>
<dbReference type="GO" id="GO:0003796">
    <property type="term" value="F:lysozyme activity"/>
    <property type="evidence" value="ECO:0007669"/>
    <property type="project" value="UniProtKB-EC"/>
</dbReference>
<dbReference type="GO" id="GO:0050829">
    <property type="term" value="P:defense response to Gram-negative bacterium"/>
    <property type="evidence" value="ECO:0007669"/>
    <property type="project" value="TreeGrafter"/>
</dbReference>
<dbReference type="GO" id="GO:0050830">
    <property type="term" value="P:defense response to Gram-positive bacterium"/>
    <property type="evidence" value="ECO:0007669"/>
    <property type="project" value="TreeGrafter"/>
</dbReference>
<dbReference type="GO" id="GO:0031640">
    <property type="term" value="P:killing of cells of another organism"/>
    <property type="evidence" value="ECO:0007669"/>
    <property type="project" value="UniProtKB-KW"/>
</dbReference>
<dbReference type="CDD" id="cd16897">
    <property type="entry name" value="LYZ_C"/>
    <property type="match status" value="1"/>
</dbReference>
<dbReference type="FunFam" id="1.10.530.10:FF:000001">
    <property type="entry name" value="Lysozyme C"/>
    <property type="match status" value="1"/>
</dbReference>
<dbReference type="Gene3D" id="1.10.530.10">
    <property type="match status" value="1"/>
</dbReference>
<dbReference type="InterPro" id="IPR001916">
    <property type="entry name" value="Glyco_hydro_22"/>
</dbReference>
<dbReference type="InterPro" id="IPR019799">
    <property type="entry name" value="Glyco_hydro_22_CS"/>
</dbReference>
<dbReference type="InterPro" id="IPR000974">
    <property type="entry name" value="Glyco_hydro_22_lys"/>
</dbReference>
<dbReference type="InterPro" id="IPR023346">
    <property type="entry name" value="Lysozyme-like_dom_sf"/>
</dbReference>
<dbReference type="PANTHER" id="PTHR11407">
    <property type="entry name" value="LYSOZYME C"/>
    <property type="match status" value="1"/>
</dbReference>
<dbReference type="PANTHER" id="PTHR11407:SF28">
    <property type="entry name" value="LYSOZYME C"/>
    <property type="match status" value="1"/>
</dbReference>
<dbReference type="Pfam" id="PF00062">
    <property type="entry name" value="Lys"/>
    <property type="match status" value="1"/>
</dbReference>
<dbReference type="PRINTS" id="PR00137">
    <property type="entry name" value="LYSOZYME"/>
</dbReference>
<dbReference type="PRINTS" id="PR00135">
    <property type="entry name" value="LYZLACT"/>
</dbReference>
<dbReference type="SMART" id="SM00263">
    <property type="entry name" value="LYZ1"/>
    <property type="match status" value="1"/>
</dbReference>
<dbReference type="SUPFAM" id="SSF53955">
    <property type="entry name" value="Lysozyme-like"/>
    <property type="match status" value="1"/>
</dbReference>
<dbReference type="PROSITE" id="PS00128">
    <property type="entry name" value="GLYCOSYL_HYDROL_F22_1"/>
    <property type="match status" value="1"/>
</dbReference>
<dbReference type="PROSITE" id="PS51348">
    <property type="entry name" value="GLYCOSYL_HYDROL_F22_2"/>
    <property type="match status" value="1"/>
</dbReference>
<name>LYSC_TRASA</name>
<proteinExistence type="evidence at protein level"/>
<evidence type="ECO:0000250" key="1"/>
<evidence type="ECO:0000255" key="2">
    <source>
        <dbReference type="PROSITE-ProRule" id="PRU00680"/>
    </source>
</evidence>
<organism>
    <name type="scientific">Tragopan satyra</name>
    <name type="common">Satyr tragopan</name>
    <name type="synonym">Meleagris satyra</name>
    <dbReference type="NCBI Taxonomy" id="9070"/>
    <lineage>
        <taxon>Eukaryota</taxon>
        <taxon>Metazoa</taxon>
        <taxon>Chordata</taxon>
        <taxon>Craniata</taxon>
        <taxon>Vertebrata</taxon>
        <taxon>Euteleostomi</taxon>
        <taxon>Archelosauria</taxon>
        <taxon>Archosauria</taxon>
        <taxon>Dinosauria</taxon>
        <taxon>Saurischia</taxon>
        <taxon>Theropoda</taxon>
        <taxon>Coelurosauria</taxon>
        <taxon>Aves</taxon>
        <taxon>Neognathae</taxon>
        <taxon>Galloanserae</taxon>
        <taxon>Galliformes</taxon>
        <taxon>Phasianidae</taxon>
        <taxon>Phasianinae</taxon>
        <taxon>Tragopan</taxon>
    </lineage>
</organism>
<gene>
    <name type="primary">LYZ</name>
</gene>
<accession>Q7LZI3</accession>
<reference key="1">
    <citation type="submission" date="2003-01" db="PIR data bank">
        <title>Description of the amino acid sequence of satyr tragopan lysozyme.</title>
        <authorList>
            <person name="Araki T."/>
            <person name="Kusao T."/>
            <person name="Torikata T."/>
        </authorList>
    </citation>
    <scope>PROTEIN SEQUENCE</scope>
</reference>
<protein>
    <recommendedName>
        <fullName>Lysozyme C</fullName>
        <ecNumber>3.2.1.17</ecNumber>
    </recommendedName>
    <alternativeName>
        <fullName>1,4-beta-N-acetylmuramidase C</fullName>
    </alternativeName>
</protein>
<comment type="function">
    <text evidence="2">Lysozymes have primarily a bacteriolytic function; those in tissues and body fluids are associated with the monocyte-macrophage system and enhance the activity of immunoagents.</text>
</comment>
<comment type="catalytic activity">
    <reaction>
        <text>Hydrolysis of (1-&gt;4)-beta-linkages between N-acetylmuramic acid and N-acetyl-D-glucosamine residues in a peptidoglycan and between N-acetyl-D-glucosamine residues in chitodextrins.</text>
        <dbReference type="EC" id="3.2.1.17"/>
    </reaction>
</comment>
<comment type="subunit">
    <text evidence="1">Monomer.</text>
</comment>
<comment type="subcellular location">
    <subcellularLocation>
        <location>Secreted</location>
    </subcellularLocation>
</comment>
<comment type="miscellaneous">
    <text>Lysozyme C is capable of both hydrolysis and transglycosylation; it also shows a slight esterase activity. It acts rapidly on both peptide-substituted and unsubstituted peptidoglycan, and slowly on chitin oligosaccharides.</text>
</comment>
<comment type="similarity">
    <text evidence="2">Belongs to the glycosyl hydrolase 22 family.</text>
</comment>
<keyword id="KW-0929">Antimicrobial</keyword>
<keyword id="KW-0081">Bacteriolytic enzyme</keyword>
<keyword id="KW-0903">Direct protein sequencing</keyword>
<keyword id="KW-1015">Disulfide bond</keyword>
<keyword id="KW-0326">Glycosidase</keyword>
<keyword id="KW-0378">Hydrolase</keyword>
<keyword id="KW-0964">Secreted</keyword>
<sequence length="129" mass="14229">KVYGRCELAAAMKRLGLDNYRGYSLGNWVCAAKFESNFNTHATNRNTDGSTDYGILQINSRWWCNDGRTPGSRNLCNIPCSALLSSDITASVNCAKKIVSGGSGMNAWVAWRNRCKGTDVQAWIRGCRL</sequence>